<comment type="function">
    <text evidence="1">Inhibits translation of capped and polyadenylated mRNAs by displacing PABPC1 from the poly(A) tail.</text>
</comment>
<comment type="subunit">
    <text evidence="1">Interacts (via central acidic portion and C-terminus) with PABPC1 (via the second and third RRM domains and the C-terminus).</text>
</comment>
<comment type="tissue specificity">
    <text evidence="3">Expressed at very high levels in pancreas, at high levels in testis and at moderately high levels in brain, heart and lung (at protein level).</text>
</comment>
<comment type="PTM">
    <text evidence="1">Ubiquitinated in vitro.</text>
</comment>
<comment type="similarity">
    <text evidence="4">Belongs to the PAIP2 family.</text>
</comment>
<comment type="caution">
    <text evidence="4">It is uncertain whether Met-1 or Met-14 is the initiator.</text>
</comment>
<comment type="sequence caution" evidence="4">
    <conflict type="erroneous initiation">
        <sequence resource="EMBL-CDS" id="BAD32392"/>
    </conflict>
</comment>
<sequence>MTTLNTGSARISIMNGSSVASTSPSVKCKEDQGLNGHEEKENPFAEYMWMENEEDFNRQVEEELQEQDFLDRCFQEMLDEEDQDWFIPARDLPQAVGHLQQQLNGLSVGDSHESEDILSKSNLNPDAKEFVPGVKY</sequence>
<protein>
    <recommendedName>
        <fullName>Polyadenylate-binding protein-interacting protein 2B</fullName>
        <shortName>PABP-interacting protein 2B</shortName>
        <shortName>PAIP-2B</shortName>
        <shortName>Poly(A)-binding protein-interacting protein 2B</shortName>
    </recommendedName>
</protein>
<accession>Q91W45</accession>
<accession>B9EJI7</accession>
<accession>Q69ZQ4</accession>
<accession>Q8BL93</accession>
<evidence type="ECO:0000250" key="1">
    <source>
        <dbReference type="UniProtKB" id="Q9ULR5"/>
    </source>
</evidence>
<evidence type="ECO:0000256" key="2">
    <source>
        <dbReference type="SAM" id="MobiDB-lite"/>
    </source>
</evidence>
<evidence type="ECO:0000269" key="3">
    <source>
    </source>
</evidence>
<evidence type="ECO:0000305" key="4"/>
<dbReference type="EMBL" id="AK173114">
    <property type="protein sequence ID" value="BAD32392.1"/>
    <property type="status" value="ALT_INIT"/>
    <property type="molecule type" value="mRNA"/>
</dbReference>
<dbReference type="EMBL" id="AK045922">
    <property type="protein sequence ID" value="BAC32533.1"/>
    <property type="molecule type" value="mRNA"/>
</dbReference>
<dbReference type="EMBL" id="AK159287">
    <property type="protein sequence ID" value="BAE34963.1"/>
    <property type="molecule type" value="mRNA"/>
</dbReference>
<dbReference type="EMBL" id="AK168804">
    <property type="protein sequence ID" value="BAE40634.1"/>
    <property type="molecule type" value="mRNA"/>
</dbReference>
<dbReference type="EMBL" id="BC017133">
    <property type="protein sequence ID" value="AAH17133.2"/>
    <property type="molecule type" value="mRNA"/>
</dbReference>
<dbReference type="EMBL" id="BC034096">
    <property type="protein sequence ID" value="AAH34096.2"/>
    <property type="molecule type" value="mRNA"/>
</dbReference>
<dbReference type="EMBL" id="BC147239">
    <property type="protein sequence ID" value="AAI47240.1"/>
    <property type="molecule type" value="mRNA"/>
</dbReference>
<dbReference type="EMBL" id="BC147240">
    <property type="protein sequence ID" value="AAI47241.1"/>
    <property type="molecule type" value="mRNA"/>
</dbReference>
<dbReference type="CCDS" id="CCDS20287.1"/>
<dbReference type="RefSeq" id="NP_666281.2">
    <property type="nucleotide sequence ID" value="NM_146169.2"/>
</dbReference>
<dbReference type="FunCoup" id="Q91W45">
    <property type="interactions" value="709"/>
</dbReference>
<dbReference type="STRING" id="10090.ENSMUSP00000050404"/>
<dbReference type="PhosphoSitePlus" id="Q91W45"/>
<dbReference type="PaxDb" id="10090-ENSMUSP00000050404"/>
<dbReference type="PeptideAtlas" id="Q91W45"/>
<dbReference type="ProteomicsDB" id="295453"/>
<dbReference type="Pumba" id="Q91W45"/>
<dbReference type="Antibodypedia" id="56903">
    <property type="antibodies" value="13 antibodies from 8 providers"/>
</dbReference>
<dbReference type="DNASU" id="232164"/>
<dbReference type="Ensembl" id="ENSMUST00000058383.9">
    <property type="protein sequence ID" value="ENSMUSP00000050404.9"/>
    <property type="gene ID" value="ENSMUSG00000045896.15"/>
</dbReference>
<dbReference type="GeneID" id="232164"/>
<dbReference type="KEGG" id="mmu:232164"/>
<dbReference type="UCSC" id="uc009cok.2">
    <property type="organism name" value="mouse"/>
</dbReference>
<dbReference type="AGR" id="MGI:2386865"/>
<dbReference type="CTD" id="400961"/>
<dbReference type="MGI" id="MGI:2386865">
    <property type="gene designation" value="Paip2b"/>
</dbReference>
<dbReference type="VEuPathDB" id="HostDB:ENSMUSG00000045896"/>
<dbReference type="eggNOG" id="ENOG502S63Z">
    <property type="taxonomic scope" value="Eukaryota"/>
</dbReference>
<dbReference type="GeneTree" id="ENSGT00390000017284"/>
<dbReference type="HOGENOM" id="CLU_134152_0_0_1"/>
<dbReference type="InParanoid" id="Q91W45"/>
<dbReference type="OMA" id="EDKEWFI"/>
<dbReference type="OrthoDB" id="5985142at2759"/>
<dbReference type="PhylomeDB" id="Q91W45"/>
<dbReference type="TreeFam" id="TF326855"/>
<dbReference type="BioGRID-ORCS" id="232164">
    <property type="hits" value="1 hit in 78 CRISPR screens"/>
</dbReference>
<dbReference type="ChiTaRS" id="Paip2b">
    <property type="organism name" value="mouse"/>
</dbReference>
<dbReference type="PRO" id="PR:Q91W45"/>
<dbReference type="Proteomes" id="UP000000589">
    <property type="component" value="Chromosome 6"/>
</dbReference>
<dbReference type="RNAct" id="Q91W45">
    <property type="molecule type" value="protein"/>
</dbReference>
<dbReference type="Bgee" id="ENSMUSG00000045896">
    <property type="expression patterns" value="Expressed in primary oocyte and 258 other cell types or tissues"/>
</dbReference>
<dbReference type="ExpressionAtlas" id="Q91W45">
    <property type="expression patterns" value="baseline and differential"/>
</dbReference>
<dbReference type="GO" id="GO:0000900">
    <property type="term" value="F:mRNA regulatory element binding translation repressor activity"/>
    <property type="evidence" value="ECO:0000250"/>
    <property type="project" value="UniProtKB"/>
</dbReference>
<dbReference type="GO" id="GO:0008143">
    <property type="term" value="F:poly(A) binding"/>
    <property type="evidence" value="ECO:0000266"/>
    <property type="project" value="MGI"/>
</dbReference>
<dbReference type="GO" id="GO:0017148">
    <property type="term" value="P:negative regulation of translation"/>
    <property type="evidence" value="ECO:0000266"/>
    <property type="project" value="MGI"/>
</dbReference>
<dbReference type="GO" id="GO:0045947">
    <property type="term" value="P:negative regulation of translational initiation"/>
    <property type="evidence" value="ECO:0000250"/>
    <property type="project" value="UniProtKB"/>
</dbReference>
<dbReference type="InterPro" id="IPR040396">
    <property type="entry name" value="PAIP2-like"/>
</dbReference>
<dbReference type="InterPro" id="IPR009818">
    <property type="entry name" value="PAM2_motif"/>
</dbReference>
<dbReference type="PANTHER" id="PTHR13154">
    <property type="entry name" value="POLYADENYLATE-BINDING PROTEIN-INTERACTING PROTEIN 2"/>
    <property type="match status" value="1"/>
</dbReference>
<dbReference type="PANTHER" id="PTHR13154:SF5">
    <property type="entry name" value="POLYADENYLATE-BINDING PROTEIN-INTERACTING PROTEIN 2B"/>
    <property type="match status" value="1"/>
</dbReference>
<dbReference type="Pfam" id="PF07145">
    <property type="entry name" value="PAM2"/>
    <property type="match status" value="1"/>
</dbReference>
<gene>
    <name type="primary">Paip2b</name>
    <name type="synonym">Kiaa1155</name>
</gene>
<proteinExistence type="evidence at protein level"/>
<feature type="chain" id="PRO_0000317295" description="Polyadenylate-binding protein-interacting protein 2B">
    <location>
        <begin position="1"/>
        <end position="136"/>
    </location>
</feature>
<feature type="region of interest" description="Disordered" evidence="2">
    <location>
        <begin position="15"/>
        <end position="40"/>
    </location>
</feature>
<feature type="region of interest" description="Disordered" evidence="2">
    <location>
        <begin position="107"/>
        <end position="136"/>
    </location>
</feature>
<feature type="compositionally biased region" description="Polar residues" evidence="2">
    <location>
        <begin position="15"/>
        <end position="25"/>
    </location>
</feature>
<feature type="compositionally biased region" description="Basic and acidic residues" evidence="2">
    <location>
        <begin position="27"/>
        <end position="40"/>
    </location>
</feature>
<feature type="sequence conflict" description="In Ref. 2; BAC32533." evidence="4" ref="2">
    <original>S</original>
    <variation>G</variation>
    <location>
        <position position="21"/>
    </location>
</feature>
<name>PAI2B_MOUSE</name>
<keyword id="KW-1185">Reference proteome</keyword>
<keyword id="KW-0678">Repressor</keyword>
<keyword id="KW-0810">Translation regulation</keyword>
<keyword id="KW-0832">Ubl conjugation</keyword>
<organism>
    <name type="scientific">Mus musculus</name>
    <name type="common">Mouse</name>
    <dbReference type="NCBI Taxonomy" id="10090"/>
    <lineage>
        <taxon>Eukaryota</taxon>
        <taxon>Metazoa</taxon>
        <taxon>Chordata</taxon>
        <taxon>Craniata</taxon>
        <taxon>Vertebrata</taxon>
        <taxon>Euteleostomi</taxon>
        <taxon>Mammalia</taxon>
        <taxon>Eutheria</taxon>
        <taxon>Euarchontoglires</taxon>
        <taxon>Glires</taxon>
        <taxon>Rodentia</taxon>
        <taxon>Myomorpha</taxon>
        <taxon>Muroidea</taxon>
        <taxon>Muridae</taxon>
        <taxon>Murinae</taxon>
        <taxon>Mus</taxon>
        <taxon>Mus</taxon>
    </lineage>
</organism>
<reference key="1">
    <citation type="journal article" date="2004" name="DNA Res.">
        <title>Prediction of the coding sequences of mouse homologues of KIAA gene: IV. The complete nucleotide sequences of 500 mouse KIAA-homologous cDNAs identified by screening of terminal sequences of cDNA clones randomly sampled from size-fractionated libraries.</title>
        <authorList>
            <person name="Okazaki N."/>
            <person name="Kikuno R."/>
            <person name="Ohara R."/>
            <person name="Inamoto S."/>
            <person name="Koseki H."/>
            <person name="Hiraoka S."/>
            <person name="Saga Y."/>
            <person name="Seino S."/>
            <person name="Nishimura M."/>
            <person name="Kaisho T."/>
            <person name="Hoshino K."/>
            <person name="Kitamura H."/>
            <person name="Nagase T."/>
            <person name="Ohara O."/>
            <person name="Koga H."/>
        </authorList>
    </citation>
    <scope>NUCLEOTIDE SEQUENCE [LARGE SCALE MRNA]</scope>
    <source>
        <tissue>Thymus</tissue>
    </source>
</reference>
<reference key="2">
    <citation type="journal article" date="2005" name="Science">
        <title>The transcriptional landscape of the mammalian genome.</title>
        <authorList>
            <person name="Carninci P."/>
            <person name="Kasukawa T."/>
            <person name="Katayama S."/>
            <person name="Gough J."/>
            <person name="Frith M.C."/>
            <person name="Maeda N."/>
            <person name="Oyama R."/>
            <person name="Ravasi T."/>
            <person name="Lenhard B."/>
            <person name="Wells C."/>
            <person name="Kodzius R."/>
            <person name="Shimokawa K."/>
            <person name="Bajic V.B."/>
            <person name="Brenner S.E."/>
            <person name="Batalov S."/>
            <person name="Forrest A.R."/>
            <person name="Zavolan M."/>
            <person name="Davis M.J."/>
            <person name="Wilming L.G."/>
            <person name="Aidinis V."/>
            <person name="Allen J.E."/>
            <person name="Ambesi-Impiombato A."/>
            <person name="Apweiler R."/>
            <person name="Aturaliya R.N."/>
            <person name="Bailey T.L."/>
            <person name="Bansal M."/>
            <person name="Baxter L."/>
            <person name="Beisel K.W."/>
            <person name="Bersano T."/>
            <person name="Bono H."/>
            <person name="Chalk A.M."/>
            <person name="Chiu K.P."/>
            <person name="Choudhary V."/>
            <person name="Christoffels A."/>
            <person name="Clutterbuck D.R."/>
            <person name="Crowe M.L."/>
            <person name="Dalla E."/>
            <person name="Dalrymple B.P."/>
            <person name="de Bono B."/>
            <person name="Della Gatta G."/>
            <person name="di Bernardo D."/>
            <person name="Down T."/>
            <person name="Engstrom P."/>
            <person name="Fagiolini M."/>
            <person name="Faulkner G."/>
            <person name="Fletcher C.F."/>
            <person name="Fukushima T."/>
            <person name="Furuno M."/>
            <person name="Futaki S."/>
            <person name="Gariboldi M."/>
            <person name="Georgii-Hemming P."/>
            <person name="Gingeras T.R."/>
            <person name="Gojobori T."/>
            <person name="Green R.E."/>
            <person name="Gustincich S."/>
            <person name="Harbers M."/>
            <person name="Hayashi Y."/>
            <person name="Hensch T.K."/>
            <person name="Hirokawa N."/>
            <person name="Hill D."/>
            <person name="Huminiecki L."/>
            <person name="Iacono M."/>
            <person name="Ikeo K."/>
            <person name="Iwama A."/>
            <person name="Ishikawa T."/>
            <person name="Jakt M."/>
            <person name="Kanapin A."/>
            <person name="Katoh M."/>
            <person name="Kawasawa Y."/>
            <person name="Kelso J."/>
            <person name="Kitamura H."/>
            <person name="Kitano H."/>
            <person name="Kollias G."/>
            <person name="Krishnan S.P."/>
            <person name="Kruger A."/>
            <person name="Kummerfeld S.K."/>
            <person name="Kurochkin I.V."/>
            <person name="Lareau L.F."/>
            <person name="Lazarevic D."/>
            <person name="Lipovich L."/>
            <person name="Liu J."/>
            <person name="Liuni S."/>
            <person name="McWilliam S."/>
            <person name="Madan Babu M."/>
            <person name="Madera M."/>
            <person name="Marchionni L."/>
            <person name="Matsuda H."/>
            <person name="Matsuzawa S."/>
            <person name="Miki H."/>
            <person name="Mignone F."/>
            <person name="Miyake S."/>
            <person name="Morris K."/>
            <person name="Mottagui-Tabar S."/>
            <person name="Mulder N."/>
            <person name="Nakano N."/>
            <person name="Nakauchi H."/>
            <person name="Ng P."/>
            <person name="Nilsson R."/>
            <person name="Nishiguchi S."/>
            <person name="Nishikawa S."/>
            <person name="Nori F."/>
            <person name="Ohara O."/>
            <person name="Okazaki Y."/>
            <person name="Orlando V."/>
            <person name="Pang K.C."/>
            <person name="Pavan W.J."/>
            <person name="Pavesi G."/>
            <person name="Pesole G."/>
            <person name="Petrovsky N."/>
            <person name="Piazza S."/>
            <person name="Reed J."/>
            <person name="Reid J.F."/>
            <person name="Ring B.Z."/>
            <person name="Ringwald M."/>
            <person name="Rost B."/>
            <person name="Ruan Y."/>
            <person name="Salzberg S.L."/>
            <person name="Sandelin A."/>
            <person name="Schneider C."/>
            <person name="Schoenbach C."/>
            <person name="Sekiguchi K."/>
            <person name="Semple C.A."/>
            <person name="Seno S."/>
            <person name="Sessa L."/>
            <person name="Sheng Y."/>
            <person name="Shibata Y."/>
            <person name="Shimada H."/>
            <person name="Shimada K."/>
            <person name="Silva D."/>
            <person name="Sinclair B."/>
            <person name="Sperling S."/>
            <person name="Stupka E."/>
            <person name="Sugiura K."/>
            <person name="Sultana R."/>
            <person name="Takenaka Y."/>
            <person name="Taki K."/>
            <person name="Tammoja K."/>
            <person name="Tan S.L."/>
            <person name="Tang S."/>
            <person name="Taylor M.S."/>
            <person name="Tegner J."/>
            <person name="Teichmann S.A."/>
            <person name="Ueda H.R."/>
            <person name="van Nimwegen E."/>
            <person name="Verardo R."/>
            <person name="Wei C.L."/>
            <person name="Yagi K."/>
            <person name="Yamanishi H."/>
            <person name="Zabarovsky E."/>
            <person name="Zhu S."/>
            <person name="Zimmer A."/>
            <person name="Hide W."/>
            <person name="Bult C."/>
            <person name="Grimmond S.M."/>
            <person name="Teasdale R.D."/>
            <person name="Liu E.T."/>
            <person name="Brusic V."/>
            <person name="Quackenbush J."/>
            <person name="Wahlestedt C."/>
            <person name="Mattick J.S."/>
            <person name="Hume D.A."/>
            <person name="Kai C."/>
            <person name="Sasaki D."/>
            <person name="Tomaru Y."/>
            <person name="Fukuda S."/>
            <person name="Kanamori-Katayama M."/>
            <person name="Suzuki M."/>
            <person name="Aoki J."/>
            <person name="Arakawa T."/>
            <person name="Iida J."/>
            <person name="Imamura K."/>
            <person name="Itoh M."/>
            <person name="Kato T."/>
            <person name="Kawaji H."/>
            <person name="Kawagashira N."/>
            <person name="Kawashima T."/>
            <person name="Kojima M."/>
            <person name="Kondo S."/>
            <person name="Konno H."/>
            <person name="Nakano K."/>
            <person name="Ninomiya N."/>
            <person name="Nishio T."/>
            <person name="Okada M."/>
            <person name="Plessy C."/>
            <person name="Shibata K."/>
            <person name="Shiraki T."/>
            <person name="Suzuki S."/>
            <person name="Tagami M."/>
            <person name="Waki K."/>
            <person name="Watahiki A."/>
            <person name="Okamura-Oho Y."/>
            <person name="Suzuki H."/>
            <person name="Kawai J."/>
            <person name="Hayashizaki Y."/>
        </authorList>
    </citation>
    <scope>NUCLEOTIDE SEQUENCE [LARGE SCALE MRNA]</scope>
    <source>
        <strain>C57BL/6J</strain>
        <tissue>Corpora quadrigemina</tissue>
        <tissue>Kidney</tissue>
    </source>
</reference>
<reference key="3">
    <citation type="journal article" date="2004" name="Genome Res.">
        <title>The status, quality, and expansion of the NIH full-length cDNA project: the Mammalian Gene Collection (MGC).</title>
        <authorList>
            <consortium name="The MGC Project Team"/>
        </authorList>
    </citation>
    <scope>NUCLEOTIDE SEQUENCE [LARGE SCALE MRNA]</scope>
    <source>
        <tissue>Brain</tissue>
        <tissue>Eye</tissue>
        <tissue>Mammary tumor</tissue>
    </source>
</reference>
<reference key="4">
    <citation type="journal article" date="2006" name="RNA">
        <title>Regulation of poly(A) binding protein function in translation: Characterization of the Paip2 homolog, Paip2B.</title>
        <authorList>
            <person name="Berlanga J.J."/>
            <person name="Baass A."/>
            <person name="Sonenberg N."/>
        </authorList>
    </citation>
    <scope>TISSUE SPECIFICITY</scope>
</reference>
<reference key="5">
    <citation type="journal article" date="2010" name="Cell">
        <title>A tissue-specific atlas of mouse protein phosphorylation and expression.</title>
        <authorList>
            <person name="Huttlin E.L."/>
            <person name="Jedrychowski M.P."/>
            <person name="Elias J.E."/>
            <person name="Goswami T."/>
            <person name="Rad R."/>
            <person name="Beausoleil S.A."/>
            <person name="Villen J."/>
            <person name="Haas W."/>
            <person name="Sowa M.E."/>
            <person name="Gygi S.P."/>
        </authorList>
    </citation>
    <scope>IDENTIFICATION BY MASS SPECTROMETRY [LARGE SCALE ANALYSIS]</scope>
    <source>
        <tissue>Brain</tissue>
        <tissue>Pancreas</tissue>
        <tissue>Testis</tissue>
    </source>
</reference>